<accession>Q9A823</accession>
<dbReference type="EC" id="2.3.3.13" evidence="1"/>
<dbReference type="EMBL" id="AE005673">
    <property type="protein sequence ID" value="AAK23520.1"/>
    <property type="molecule type" value="Genomic_DNA"/>
</dbReference>
<dbReference type="PIR" id="D87440">
    <property type="entry name" value="D87440"/>
</dbReference>
<dbReference type="RefSeq" id="NP_420352.1">
    <property type="nucleotide sequence ID" value="NC_002696.2"/>
</dbReference>
<dbReference type="RefSeq" id="WP_010919415.1">
    <property type="nucleotide sequence ID" value="NC_002696.2"/>
</dbReference>
<dbReference type="SMR" id="Q9A823"/>
<dbReference type="STRING" id="190650.CC_1541"/>
<dbReference type="EnsemblBacteria" id="AAK23520">
    <property type="protein sequence ID" value="AAK23520"/>
    <property type="gene ID" value="CC_1541"/>
</dbReference>
<dbReference type="KEGG" id="ccr:CC_1541"/>
<dbReference type="PATRIC" id="fig|190650.5.peg.1569"/>
<dbReference type="eggNOG" id="COG0119">
    <property type="taxonomic scope" value="Bacteria"/>
</dbReference>
<dbReference type="HOGENOM" id="CLU_022158_0_1_5"/>
<dbReference type="BioCyc" id="CAULO:CC1541-MONOMER"/>
<dbReference type="UniPathway" id="UPA00048">
    <property type="reaction ID" value="UER00070"/>
</dbReference>
<dbReference type="Proteomes" id="UP000001816">
    <property type="component" value="Chromosome"/>
</dbReference>
<dbReference type="GO" id="GO:0005829">
    <property type="term" value="C:cytosol"/>
    <property type="evidence" value="ECO:0007669"/>
    <property type="project" value="TreeGrafter"/>
</dbReference>
<dbReference type="GO" id="GO:0003852">
    <property type="term" value="F:2-isopropylmalate synthase activity"/>
    <property type="evidence" value="ECO:0007669"/>
    <property type="project" value="UniProtKB-UniRule"/>
</dbReference>
<dbReference type="GO" id="GO:0003985">
    <property type="term" value="F:acetyl-CoA C-acetyltransferase activity"/>
    <property type="evidence" value="ECO:0007669"/>
    <property type="project" value="UniProtKB-UniRule"/>
</dbReference>
<dbReference type="GO" id="GO:0030145">
    <property type="term" value="F:manganese ion binding"/>
    <property type="evidence" value="ECO:0007669"/>
    <property type="project" value="UniProtKB-UniRule"/>
</dbReference>
<dbReference type="GO" id="GO:0009098">
    <property type="term" value="P:L-leucine biosynthetic process"/>
    <property type="evidence" value="ECO:0007669"/>
    <property type="project" value="UniProtKB-UniRule"/>
</dbReference>
<dbReference type="CDD" id="cd07940">
    <property type="entry name" value="DRE_TIM_IPMS"/>
    <property type="match status" value="1"/>
</dbReference>
<dbReference type="FunFam" id="1.10.238.260:FF:000001">
    <property type="entry name" value="2-isopropylmalate synthase"/>
    <property type="match status" value="1"/>
</dbReference>
<dbReference type="FunFam" id="3.20.20.70:FF:000010">
    <property type="entry name" value="2-isopropylmalate synthase"/>
    <property type="match status" value="1"/>
</dbReference>
<dbReference type="FunFam" id="3.30.160.270:FF:000003">
    <property type="entry name" value="2-isopropylmalate synthase"/>
    <property type="match status" value="1"/>
</dbReference>
<dbReference type="Gene3D" id="3.30.160.270">
    <property type="match status" value="1"/>
</dbReference>
<dbReference type="Gene3D" id="3.20.20.70">
    <property type="entry name" value="Aldolase class I"/>
    <property type="match status" value="1"/>
</dbReference>
<dbReference type="HAMAP" id="MF_01025">
    <property type="entry name" value="LeuA_type1"/>
    <property type="match status" value="1"/>
</dbReference>
<dbReference type="InterPro" id="IPR050073">
    <property type="entry name" value="2-IPM_HCS-like"/>
</dbReference>
<dbReference type="InterPro" id="IPR013709">
    <property type="entry name" value="2-isopropylmalate_synth_dimer"/>
</dbReference>
<dbReference type="InterPro" id="IPR002034">
    <property type="entry name" value="AIPM/Hcit_synth_CS"/>
</dbReference>
<dbReference type="InterPro" id="IPR013785">
    <property type="entry name" value="Aldolase_TIM"/>
</dbReference>
<dbReference type="InterPro" id="IPR054691">
    <property type="entry name" value="LeuA/HCS_post-cat"/>
</dbReference>
<dbReference type="InterPro" id="IPR036230">
    <property type="entry name" value="LeuA_allosteric_dom_sf"/>
</dbReference>
<dbReference type="InterPro" id="IPR005671">
    <property type="entry name" value="LeuA_bact_synth"/>
</dbReference>
<dbReference type="InterPro" id="IPR000891">
    <property type="entry name" value="PYR_CT"/>
</dbReference>
<dbReference type="NCBIfam" id="TIGR00973">
    <property type="entry name" value="leuA_bact"/>
    <property type="match status" value="1"/>
</dbReference>
<dbReference type="NCBIfam" id="NF002086">
    <property type="entry name" value="PRK00915.1-3"/>
    <property type="match status" value="1"/>
</dbReference>
<dbReference type="NCBIfam" id="NF002087">
    <property type="entry name" value="PRK00915.1-4"/>
    <property type="match status" value="1"/>
</dbReference>
<dbReference type="PANTHER" id="PTHR10277:SF9">
    <property type="entry name" value="2-ISOPROPYLMALATE SYNTHASE 1, CHLOROPLASTIC-RELATED"/>
    <property type="match status" value="1"/>
</dbReference>
<dbReference type="PANTHER" id="PTHR10277">
    <property type="entry name" value="HOMOCITRATE SYNTHASE-RELATED"/>
    <property type="match status" value="1"/>
</dbReference>
<dbReference type="Pfam" id="PF22617">
    <property type="entry name" value="HCS_D2"/>
    <property type="match status" value="1"/>
</dbReference>
<dbReference type="Pfam" id="PF00682">
    <property type="entry name" value="HMGL-like"/>
    <property type="match status" value="1"/>
</dbReference>
<dbReference type="Pfam" id="PF08502">
    <property type="entry name" value="LeuA_dimer"/>
    <property type="match status" value="1"/>
</dbReference>
<dbReference type="SMART" id="SM00917">
    <property type="entry name" value="LeuA_dimer"/>
    <property type="match status" value="1"/>
</dbReference>
<dbReference type="SUPFAM" id="SSF110921">
    <property type="entry name" value="2-isopropylmalate synthase LeuA, allosteric (dimerisation) domain"/>
    <property type="match status" value="1"/>
</dbReference>
<dbReference type="SUPFAM" id="SSF51569">
    <property type="entry name" value="Aldolase"/>
    <property type="match status" value="1"/>
</dbReference>
<dbReference type="PROSITE" id="PS00816">
    <property type="entry name" value="AIPM_HOMOCIT_SYNTH_2"/>
    <property type="match status" value="1"/>
</dbReference>
<dbReference type="PROSITE" id="PS50991">
    <property type="entry name" value="PYR_CT"/>
    <property type="match status" value="1"/>
</dbReference>
<proteinExistence type="inferred from homology"/>
<keyword id="KW-0028">Amino-acid biosynthesis</keyword>
<keyword id="KW-0100">Branched-chain amino acid biosynthesis</keyword>
<keyword id="KW-0963">Cytoplasm</keyword>
<keyword id="KW-0432">Leucine biosynthesis</keyword>
<keyword id="KW-0464">Manganese</keyword>
<keyword id="KW-0479">Metal-binding</keyword>
<keyword id="KW-1185">Reference proteome</keyword>
<keyword id="KW-0808">Transferase</keyword>
<organism>
    <name type="scientific">Caulobacter vibrioides (strain ATCC 19089 / CIP 103742 / CB 15)</name>
    <name type="common">Caulobacter crescentus</name>
    <dbReference type="NCBI Taxonomy" id="190650"/>
    <lineage>
        <taxon>Bacteria</taxon>
        <taxon>Pseudomonadati</taxon>
        <taxon>Pseudomonadota</taxon>
        <taxon>Alphaproteobacteria</taxon>
        <taxon>Caulobacterales</taxon>
        <taxon>Caulobacteraceae</taxon>
        <taxon>Caulobacter</taxon>
    </lineage>
</organism>
<feature type="chain" id="PRO_0000140348" description="2-isopropylmalate synthase">
    <location>
        <begin position="1"/>
        <end position="524"/>
    </location>
</feature>
<feature type="domain" description="Pyruvate carboxyltransferase" evidence="1">
    <location>
        <begin position="15"/>
        <end position="275"/>
    </location>
</feature>
<feature type="region of interest" description="Regulatory domain" evidence="1">
    <location>
        <begin position="401"/>
        <end position="524"/>
    </location>
</feature>
<feature type="binding site" evidence="1">
    <location>
        <position position="24"/>
    </location>
    <ligand>
        <name>Mn(2+)</name>
        <dbReference type="ChEBI" id="CHEBI:29035"/>
    </ligand>
</feature>
<feature type="binding site" evidence="1">
    <location>
        <position position="212"/>
    </location>
    <ligand>
        <name>Mn(2+)</name>
        <dbReference type="ChEBI" id="CHEBI:29035"/>
    </ligand>
</feature>
<feature type="binding site" evidence="1">
    <location>
        <position position="214"/>
    </location>
    <ligand>
        <name>Mn(2+)</name>
        <dbReference type="ChEBI" id="CHEBI:29035"/>
    </ligand>
</feature>
<feature type="binding site" evidence="1">
    <location>
        <position position="248"/>
    </location>
    <ligand>
        <name>Mn(2+)</name>
        <dbReference type="ChEBI" id="CHEBI:29035"/>
    </ligand>
</feature>
<sequence>MTSVPAGAISKRDNVVVFDTTMRDGEQSPGASMSLEEKLELAKILEEMGVDVIEAGFPIASNGDFEAVRQIAELITESTVCGLARAAAGDIDRCAEAVRRAKRGRIHTFISTSPVHMKYKLQMEPDAVLEAITRSVSHARNLVGDVEWSAEDATRTERDFLKRCVEAAIKAGATTINLPDTVGYSYPSEYGELFRDVITSVPGADKAIFSAHCHNDLGLAVANSIAAIEGGARQVEVAINGIGERAGNAALEEIVMALRVRGDHLPYGTSVDPVHITRASRYVSAITGFPVQFNKAIVGKNAFAHESGIHQDGMLKNAETYEIMKPEDVGQGATNLVMGKHSGRHAFREKLKALGYELGQNALNDAFGRFKELADKKKHVFDDDIVALVDDALARGSEKIRVSRLRVVAGTDGQSAELTLDIDGVASTAEATGDGPVDAVFNAIHKIVPHSAALRLFQVHAVTEGTDAQAQVSVRLEEDGRIATGAAADTDTLTASAKAYVNALNNLFARKEKSRPEAAIASGF</sequence>
<comment type="function">
    <text evidence="1">Catalyzes the condensation of the acetyl group of acetyl-CoA with 3-methyl-2-oxobutanoate (2-ketoisovalerate) to form 3-carboxy-3-hydroxy-4-methylpentanoate (2-isopropylmalate).</text>
</comment>
<comment type="catalytic activity">
    <reaction evidence="1">
        <text>3-methyl-2-oxobutanoate + acetyl-CoA + H2O = (2S)-2-isopropylmalate + CoA + H(+)</text>
        <dbReference type="Rhea" id="RHEA:21524"/>
        <dbReference type="ChEBI" id="CHEBI:1178"/>
        <dbReference type="ChEBI" id="CHEBI:11851"/>
        <dbReference type="ChEBI" id="CHEBI:15377"/>
        <dbReference type="ChEBI" id="CHEBI:15378"/>
        <dbReference type="ChEBI" id="CHEBI:57287"/>
        <dbReference type="ChEBI" id="CHEBI:57288"/>
        <dbReference type="EC" id="2.3.3.13"/>
    </reaction>
</comment>
<comment type="cofactor">
    <cofactor evidence="1">
        <name>Mn(2+)</name>
        <dbReference type="ChEBI" id="CHEBI:29035"/>
    </cofactor>
</comment>
<comment type="pathway">
    <text evidence="1">Amino-acid biosynthesis; L-leucine biosynthesis; L-leucine from 3-methyl-2-oxobutanoate: step 1/4.</text>
</comment>
<comment type="subunit">
    <text evidence="1">Homodimer.</text>
</comment>
<comment type="subcellular location">
    <subcellularLocation>
        <location evidence="1">Cytoplasm</location>
    </subcellularLocation>
</comment>
<comment type="similarity">
    <text evidence="1">Belongs to the alpha-IPM synthase/homocitrate synthase family. LeuA type 1 subfamily.</text>
</comment>
<gene>
    <name evidence="1" type="primary">leuA</name>
    <name type="ordered locus">CC_1541</name>
</gene>
<reference key="1">
    <citation type="journal article" date="2001" name="Proc. Natl. Acad. Sci. U.S.A.">
        <title>Complete genome sequence of Caulobacter crescentus.</title>
        <authorList>
            <person name="Nierman W.C."/>
            <person name="Feldblyum T.V."/>
            <person name="Laub M.T."/>
            <person name="Paulsen I.T."/>
            <person name="Nelson K.E."/>
            <person name="Eisen J.A."/>
            <person name="Heidelberg J.F."/>
            <person name="Alley M.R.K."/>
            <person name="Ohta N."/>
            <person name="Maddock J.R."/>
            <person name="Potocka I."/>
            <person name="Nelson W.C."/>
            <person name="Newton A."/>
            <person name="Stephens C."/>
            <person name="Phadke N.D."/>
            <person name="Ely B."/>
            <person name="DeBoy R.T."/>
            <person name="Dodson R.J."/>
            <person name="Durkin A.S."/>
            <person name="Gwinn M.L."/>
            <person name="Haft D.H."/>
            <person name="Kolonay J.F."/>
            <person name="Smit J."/>
            <person name="Craven M.B."/>
            <person name="Khouri H.M."/>
            <person name="Shetty J."/>
            <person name="Berry K.J."/>
            <person name="Utterback T.R."/>
            <person name="Tran K."/>
            <person name="Wolf A.M."/>
            <person name="Vamathevan J.J."/>
            <person name="Ermolaeva M.D."/>
            <person name="White O."/>
            <person name="Salzberg S.L."/>
            <person name="Venter J.C."/>
            <person name="Shapiro L."/>
            <person name="Fraser C.M."/>
        </authorList>
    </citation>
    <scope>NUCLEOTIDE SEQUENCE [LARGE SCALE GENOMIC DNA]</scope>
    <source>
        <strain>ATCC 19089 / CIP 103742 / CB 15</strain>
    </source>
</reference>
<name>LEU1_CAUVC</name>
<evidence type="ECO:0000255" key="1">
    <source>
        <dbReference type="HAMAP-Rule" id="MF_01025"/>
    </source>
</evidence>
<protein>
    <recommendedName>
        <fullName evidence="1">2-isopropylmalate synthase</fullName>
        <ecNumber evidence="1">2.3.3.13</ecNumber>
    </recommendedName>
    <alternativeName>
        <fullName evidence="1">Alpha-IPM synthase</fullName>
    </alternativeName>
    <alternativeName>
        <fullName evidence="1">Alpha-isopropylmalate synthase</fullName>
    </alternativeName>
</protein>